<protein>
    <recommendedName>
        <fullName evidence="2">D-alanine--D-alanine ligase B</fullName>
        <ecNumber evidence="2">6.3.2.4</ecNumber>
    </recommendedName>
    <alternativeName>
        <fullName evidence="2">D-Ala-D-Ala ligase B</fullName>
    </alternativeName>
    <alternativeName>
        <fullName evidence="2">D-alanylalanine synthetase B</fullName>
    </alternativeName>
</protein>
<proteinExistence type="inferred from homology"/>
<comment type="function">
    <text evidence="2">Cell wall formation.</text>
</comment>
<comment type="catalytic activity">
    <reaction evidence="2">
        <text>2 D-alanine + ATP = D-alanyl-D-alanine + ADP + phosphate + H(+)</text>
        <dbReference type="Rhea" id="RHEA:11224"/>
        <dbReference type="ChEBI" id="CHEBI:15378"/>
        <dbReference type="ChEBI" id="CHEBI:30616"/>
        <dbReference type="ChEBI" id="CHEBI:43474"/>
        <dbReference type="ChEBI" id="CHEBI:57416"/>
        <dbReference type="ChEBI" id="CHEBI:57822"/>
        <dbReference type="ChEBI" id="CHEBI:456216"/>
        <dbReference type="EC" id="6.3.2.4"/>
    </reaction>
</comment>
<comment type="cofactor">
    <cofactor evidence="1">
        <name>Mg(2+)</name>
        <dbReference type="ChEBI" id="CHEBI:18420"/>
    </cofactor>
    <cofactor evidence="1">
        <name>Mn(2+)</name>
        <dbReference type="ChEBI" id="CHEBI:29035"/>
    </cofactor>
    <text evidence="1">Binds 2 magnesium or manganese ions per subunit.</text>
</comment>
<comment type="pathway">
    <text evidence="2">Cell wall biogenesis; peptidoglycan biosynthesis.</text>
</comment>
<comment type="subcellular location">
    <subcellularLocation>
        <location evidence="2">Cytoplasm</location>
    </subcellularLocation>
</comment>
<comment type="similarity">
    <text evidence="2">Belongs to the D-alanine--D-alanine ligase family.</text>
</comment>
<evidence type="ECO:0000250" key="1"/>
<evidence type="ECO:0000255" key="2">
    <source>
        <dbReference type="HAMAP-Rule" id="MF_00047"/>
    </source>
</evidence>
<feature type="chain" id="PRO_0000177860" description="D-alanine--D-alanine ligase B">
    <location>
        <begin position="1"/>
        <end position="319"/>
    </location>
</feature>
<feature type="domain" description="ATP-grasp" evidence="2">
    <location>
        <begin position="117"/>
        <end position="312"/>
    </location>
</feature>
<feature type="binding site" evidence="2">
    <location>
        <begin position="143"/>
        <end position="198"/>
    </location>
    <ligand>
        <name>ATP</name>
        <dbReference type="ChEBI" id="CHEBI:30616"/>
    </ligand>
</feature>
<feature type="binding site" evidence="2">
    <location>
        <position position="266"/>
    </location>
    <ligand>
        <name>Mg(2+)</name>
        <dbReference type="ChEBI" id="CHEBI:18420"/>
        <label>1</label>
    </ligand>
</feature>
<feature type="binding site" evidence="2">
    <location>
        <position position="279"/>
    </location>
    <ligand>
        <name>Mg(2+)</name>
        <dbReference type="ChEBI" id="CHEBI:18420"/>
        <label>1</label>
    </ligand>
</feature>
<feature type="binding site" evidence="2">
    <location>
        <position position="279"/>
    </location>
    <ligand>
        <name>Mg(2+)</name>
        <dbReference type="ChEBI" id="CHEBI:18420"/>
        <label>2</label>
    </ligand>
</feature>
<feature type="binding site" evidence="2">
    <location>
        <position position="281"/>
    </location>
    <ligand>
        <name>Mg(2+)</name>
        <dbReference type="ChEBI" id="CHEBI:18420"/>
        <label>2</label>
    </ligand>
</feature>
<gene>
    <name evidence="2" type="primary">ddlB</name>
    <name type="ordered locus">PSPTO_4406</name>
</gene>
<name>DDLB_PSESM</name>
<organism>
    <name type="scientific">Pseudomonas syringae pv. tomato (strain ATCC BAA-871 / DC3000)</name>
    <dbReference type="NCBI Taxonomy" id="223283"/>
    <lineage>
        <taxon>Bacteria</taxon>
        <taxon>Pseudomonadati</taxon>
        <taxon>Pseudomonadota</taxon>
        <taxon>Gammaproteobacteria</taxon>
        <taxon>Pseudomonadales</taxon>
        <taxon>Pseudomonadaceae</taxon>
        <taxon>Pseudomonas</taxon>
    </lineage>
</organism>
<reference key="1">
    <citation type="journal article" date="2003" name="Proc. Natl. Acad. Sci. U.S.A.">
        <title>The complete genome sequence of the Arabidopsis and tomato pathogen Pseudomonas syringae pv. tomato DC3000.</title>
        <authorList>
            <person name="Buell C.R."/>
            <person name="Joardar V."/>
            <person name="Lindeberg M."/>
            <person name="Selengut J."/>
            <person name="Paulsen I.T."/>
            <person name="Gwinn M.L."/>
            <person name="Dodson R.J."/>
            <person name="DeBoy R.T."/>
            <person name="Durkin A.S."/>
            <person name="Kolonay J.F."/>
            <person name="Madupu R."/>
            <person name="Daugherty S.C."/>
            <person name="Brinkac L.M."/>
            <person name="Beanan M.J."/>
            <person name="Haft D.H."/>
            <person name="Nelson W.C."/>
            <person name="Davidsen T.M."/>
            <person name="Zafar N."/>
            <person name="Zhou L."/>
            <person name="Liu J."/>
            <person name="Yuan Q."/>
            <person name="Khouri H.M."/>
            <person name="Fedorova N.B."/>
            <person name="Tran B."/>
            <person name="Russell D."/>
            <person name="Berry K.J."/>
            <person name="Utterback T.R."/>
            <person name="Van Aken S.E."/>
            <person name="Feldblyum T.V."/>
            <person name="D'Ascenzo M."/>
            <person name="Deng W.-L."/>
            <person name="Ramos A.R."/>
            <person name="Alfano J.R."/>
            <person name="Cartinhour S."/>
            <person name="Chatterjee A.K."/>
            <person name="Delaney T.P."/>
            <person name="Lazarowitz S.G."/>
            <person name="Martin G.B."/>
            <person name="Schneider D.J."/>
            <person name="Tang X."/>
            <person name="Bender C.L."/>
            <person name="White O."/>
            <person name="Fraser C.M."/>
            <person name="Collmer A."/>
        </authorList>
    </citation>
    <scope>NUCLEOTIDE SEQUENCE [LARGE SCALE GENOMIC DNA]</scope>
    <source>
        <strain>ATCC BAA-871 / DC3000</strain>
    </source>
</reference>
<accession>Q87WY7</accession>
<keyword id="KW-0067">ATP-binding</keyword>
<keyword id="KW-0133">Cell shape</keyword>
<keyword id="KW-0961">Cell wall biogenesis/degradation</keyword>
<keyword id="KW-0963">Cytoplasm</keyword>
<keyword id="KW-0436">Ligase</keyword>
<keyword id="KW-0460">Magnesium</keyword>
<keyword id="KW-0464">Manganese</keyword>
<keyword id="KW-0479">Metal-binding</keyword>
<keyword id="KW-0547">Nucleotide-binding</keyword>
<keyword id="KW-0573">Peptidoglycan synthesis</keyword>
<keyword id="KW-1185">Reference proteome</keyword>
<dbReference type="EC" id="6.3.2.4" evidence="2"/>
<dbReference type="EMBL" id="AE016853">
    <property type="protein sequence ID" value="AAO57855.1"/>
    <property type="molecule type" value="Genomic_DNA"/>
</dbReference>
<dbReference type="RefSeq" id="NP_794160.1">
    <property type="nucleotide sequence ID" value="NC_004578.1"/>
</dbReference>
<dbReference type="RefSeq" id="WP_011105003.1">
    <property type="nucleotide sequence ID" value="NC_004578.1"/>
</dbReference>
<dbReference type="SMR" id="Q87WY7"/>
<dbReference type="STRING" id="223283.PSPTO_4406"/>
<dbReference type="GeneID" id="1186087"/>
<dbReference type="KEGG" id="pst:PSPTO_4406"/>
<dbReference type="PATRIC" id="fig|223283.9.peg.4521"/>
<dbReference type="eggNOG" id="COG1181">
    <property type="taxonomic scope" value="Bacteria"/>
</dbReference>
<dbReference type="HOGENOM" id="CLU_039268_1_2_6"/>
<dbReference type="OrthoDB" id="9813261at2"/>
<dbReference type="PhylomeDB" id="Q87WY7"/>
<dbReference type="UniPathway" id="UPA00219"/>
<dbReference type="Proteomes" id="UP000002515">
    <property type="component" value="Chromosome"/>
</dbReference>
<dbReference type="GO" id="GO:0005829">
    <property type="term" value="C:cytosol"/>
    <property type="evidence" value="ECO:0007669"/>
    <property type="project" value="TreeGrafter"/>
</dbReference>
<dbReference type="GO" id="GO:0005524">
    <property type="term" value="F:ATP binding"/>
    <property type="evidence" value="ECO:0007669"/>
    <property type="project" value="UniProtKB-KW"/>
</dbReference>
<dbReference type="GO" id="GO:0008716">
    <property type="term" value="F:D-alanine-D-alanine ligase activity"/>
    <property type="evidence" value="ECO:0007669"/>
    <property type="project" value="UniProtKB-UniRule"/>
</dbReference>
<dbReference type="GO" id="GO:0046872">
    <property type="term" value="F:metal ion binding"/>
    <property type="evidence" value="ECO:0007669"/>
    <property type="project" value="UniProtKB-KW"/>
</dbReference>
<dbReference type="GO" id="GO:0071555">
    <property type="term" value="P:cell wall organization"/>
    <property type="evidence" value="ECO:0007669"/>
    <property type="project" value="UniProtKB-KW"/>
</dbReference>
<dbReference type="GO" id="GO:0009252">
    <property type="term" value="P:peptidoglycan biosynthetic process"/>
    <property type="evidence" value="ECO:0007669"/>
    <property type="project" value="UniProtKB-UniRule"/>
</dbReference>
<dbReference type="GO" id="GO:0008360">
    <property type="term" value="P:regulation of cell shape"/>
    <property type="evidence" value="ECO:0007669"/>
    <property type="project" value="UniProtKB-KW"/>
</dbReference>
<dbReference type="FunFam" id="3.30.1490.20:FF:000007">
    <property type="entry name" value="D-alanine--D-alanine ligase"/>
    <property type="match status" value="1"/>
</dbReference>
<dbReference type="FunFam" id="3.30.470.20:FF:000008">
    <property type="entry name" value="D-alanine--D-alanine ligase"/>
    <property type="match status" value="1"/>
</dbReference>
<dbReference type="FunFam" id="3.40.50.20:FF:000013">
    <property type="entry name" value="D-alanine--D-alanine ligase"/>
    <property type="match status" value="1"/>
</dbReference>
<dbReference type="Gene3D" id="3.40.50.20">
    <property type="match status" value="1"/>
</dbReference>
<dbReference type="Gene3D" id="3.30.1490.20">
    <property type="entry name" value="ATP-grasp fold, A domain"/>
    <property type="match status" value="1"/>
</dbReference>
<dbReference type="Gene3D" id="3.30.470.20">
    <property type="entry name" value="ATP-grasp fold, B domain"/>
    <property type="match status" value="1"/>
</dbReference>
<dbReference type="HAMAP" id="MF_00047">
    <property type="entry name" value="Dala_Dala_lig"/>
    <property type="match status" value="1"/>
</dbReference>
<dbReference type="InterPro" id="IPR011761">
    <property type="entry name" value="ATP-grasp"/>
</dbReference>
<dbReference type="InterPro" id="IPR013815">
    <property type="entry name" value="ATP_grasp_subdomain_1"/>
</dbReference>
<dbReference type="InterPro" id="IPR000291">
    <property type="entry name" value="D-Ala_lig_Van_CS"/>
</dbReference>
<dbReference type="InterPro" id="IPR005905">
    <property type="entry name" value="D_ala_D_ala"/>
</dbReference>
<dbReference type="InterPro" id="IPR011095">
    <property type="entry name" value="Dala_Dala_lig_C"/>
</dbReference>
<dbReference type="InterPro" id="IPR011127">
    <property type="entry name" value="Dala_Dala_lig_N"/>
</dbReference>
<dbReference type="InterPro" id="IPR016185">
    <property type="entry name" value="PreATP-grasp_dom_sf"/>
</dbReference>
<dbReference type="NCBIfam" id="TIGR01205">
    <property type="entry name" value="D_ala_D_alaTIGR"/>
    <property type="match status" value="1"/>
</dbReference>
<dbReference type="NCBIfam" id="NF002378">
    <property type="entry name" value="PRK01372.1"/>
    <property type="match status" value="1"/>
</dbReference>
<dbReference type="PANTHER" id="PTHR23132">
    <property type="entry name" value="D-ALANINE--D-ALANINE LIGASE"/>
    <property type="match status" value="1"/>
</dbReference>
<dbReference type="PANTHER" id="PTHR23132:SF23">
    <property type="entry name" value="D-ALANINE--D-ALANINE LIGASE B"/>
    <property type="match status" value="1"/>
</dbReference>
<dbReference type="Pfam" id="PF07478">
    <property type="entry name" value="Dala_Dala_lig_C"/>
    <property type="match status" value="1"/>
</dbReference>
<dbReference type="Pfam" id="PF01820">
    <property type="entry name" value="Dala_Dala_lig_N"/>
    <property type="match status" value="1"/>
</dbReference>
<dbReference type="PIRSF" id="PIRSF039102">
    <property type="entry name" value="Ddl/VanB"/>
    <property type="match status" value="1"/>
</dbReference>
<dbReference type="SUPFAM" id="SSF56059">
    <property type="entry name" value="Glutathione synthetase ATP-binding domain-like"/>
    <property type="match status" value="1"/>
</dbReference>
<dbReference type="SUPFAM" id="SSF52440">
    <property type="entry name" value="PreATP-grasp domain"/>
    <property type="match status" value="1"/>
</dbReference>
<dbReference type="PROSITE" id="PS50975">
    <property type="entry name" value="ATP_GRASP"/>
    <property type="match status" value="1"/>
</dbReference>
<dbReference type="PROSITE" id="PS00843">
    <property type="entry name" value="DALA_DALA_LIGASE_1"/>
    <property type="match status" value="1"/>
</dbReference>
<dbReference type="PROSITE" id="PS00844">
    <property type="entry name" value="DALA_DALA_LIGASE_2"/>
    <property type="match status" value="1"/>
</dbReference>
<sequence>MTAVARSSLRSTLEPKSFGRVAVLFGGKSAEREVSLNSGNAVLKALLDAGVDAFGIDVGDDFLQRLVSEKIDRAFIVLHGRGGEDGTMQGLLECLEIPYTGSGVLASALAMDKLRTKQVWQSLGPATPLHAVLENENDCICAATELGFPLIVKPAHEGSSIGMAKVNSVDELIAAWKAASTYDSQVLVEQWIQGPEFTVASLRGQVLPPIGLGTPHSFYDYDAKYLASDTQYRIPCGLDDAQEQQLKQLAARACDAIGIAGWARTDVMQDAEGKFWLLEVNTVPGMTDHSLVPMAARAAGLNFQQLVLAILADSVQARG</sequence>